<dbReference type="EC" id="4.2.3.5" evidence="1"/>
<dbReference type="EMBL" id="CP000124">
    <property type="protein sequence ID" value="ABA47963.1"/>
    <property type="status" value="ALT_INIT"/>
    <property type="molecule type" value="Genomic_DNA"/>
</dbReference>
<dbReference type="RefSeq" id="WP_004534774.1">
    <property type="nucleotide sequence ID" value="NC_007434.1"/>
</dbReference>
<dbReference type="SMR" id="Q3JT35"/>
<dbReference type="EnsemblBacteria" id="ABA47963">
    <property type="protein sequence ID" value="ABA47963"/>
    <property type="gene ID" value="BURPS1710b_1867"/>
</dbReference>
<dbReference type="GeneID" id="93060029"/>
<dbReference type="KEGG" id="bpm:BURPS1710b_1867"/>
<dbReference type="HOGENOM" id="CLU_034547_0_2_4"/>
<dbReference type="UniPathway" id="UPA00053">
    <property type="reaction ID" value="UER00090"/>
</dbReference>
<dbReference type="Proteomes" id="UP000002700">
    <property type="component" value="Chromosome I"/>
</dbReference>
<dbReference type="GO" id="GO:0005829">
    <property type="term" value="C:cytosol"/>
    <property type="evidence" value="ECO:0007669"/>
    <property type="project" value="TreeGrafter"/>
</dbReference>
<dbReference type="GO" id="GO:0004107">
    <property type="term" value="F:chorismate synthase activity"/>
    <property type="evidence" value="ECO:0007669"/>
    <property type="project" value="UniProtKB-UniRule"/>
</dbReference>
<dbReference type="GO" id="GO:0010181">
    <property type="term" value="F:FMN binding"/>
    <property type="evidence" value="ECO:0007669"/>
    <property type="project" value="TreeGrafter"/>
</dbReference>
<dbReference type="GO" id="GO:0008652">
    <property type="term" value="P:amino acid biosynthetic process"/>
    <property type="evidence" value="ECO:0007669"/>
    <property type="project" value="UniProtKB-KW"/>
</dbReference>
<dbReference type="GO" id="GO:0009073">
    <property type="term" value="P:aromatic amino acid family biosynthetic process"/>
    <property type="evidence" value="ECO:0007669"/>
    <property type="project" value="UniProtKB-KW"/>
</dbReference>
<dbReference type="GO" id="GO:0009423">
    <property type="term" value="P:chorismate biosynthetic process"/>
    <property type="evidence" value="ECO:0007669"/>
    <property type="project" value="UniProtKB-UniRule"/>
</dbReference>
<dbReference type="CDD" id="cd07304">
    <property type="entry name" value="Chorismate_synthase"/>
    <property type="match status" value="1"/>
</dbReference>
<dbReference type="FunFam" id="3.60.150.10:FF:000001">
    <property type="entry name" value="Chorismate synthase"/>
    <property type="match status" value="1"/>
</dbReference>
<dbReference type="Gene3D" id="3.60.150.10">
    <property type="entry name" value="Chorismate synthase AroC"/>
    <property type="match status" value="1"/>
</dbReference>
<dbReference type="HAMAP" id="MF_00300">
    <property type="entry name" value="Chorismate_synth"/>
    <property type="match status" value="1"/>
</dbReference>
<dbReference type="InterPro" id="IPR000453">
    <property type="entry name" value="Chorismate_synth"/>
</dbReference>
<dbReference type="InterPro" id="IPR035904">
    <property type="entry name" value="Chorismate_synth_AroC_sf"/>
</dbReference>
<dbReference type="InterPro" id="IPR020541">
    <property type="entry name" value="Chorismate_synthase_CS"/>
</dbReference>
<dbReference type="NCBIfam" id="TIGR00033">
    <property type="entry name" value="aroC"/>
    <property type="match status" value="1"/>
</dbReference>
<dbReference type="NCBIfam" id="NF003793">
    <property type="entry name" value="PRK05382.1"/>
    <property type="match status" value="1"/>
</dbReference>
<dbReference type="PANTHER" id="PTHR21085">
    <property type="entry name" value="CHORISMATE SYNTHASE"/>
    <property type="match status" value="1"/>
</dbReference>
<dbReference type="PANTHER" id="PTHR21085:SF0">
    <property type="entry name" value="CHORISMATE SYNTHASE"/>
    <property type="match status" value="1"/>
</dbReference>
<dbReference type="Pfam" id="PF01264">
    <property type="entry name" value="Chorismate_synt"/>
    <property type="match status" value="1"/>
</dbReference>
<dbReference type="PIRSF" id="PIRSF001456">
    <property type="entry name" value="Chorismate_synth"/>
    <property type="match status" value="1"/>
</dbReference>
<dbReference type="SUPFAM" id="SSF103263">
    <property type="entry name" value="Chorismate synthase, AroC"/>
    <property type="match status" value="1"/>
</dbReference>
<dbReference type="PROSITE" id="PS00787">
    <property type="entry name" value="CHORISMATE_SYNTHASE_1"/>
    <property type="match status" value="1"/>
</dbReference>
<dbReference type="PROSITE" id="PS00788">
    <property type="entry name" value="CHORISMATE_SYNTHASE_2"/>
    <property type="match status" value="1"/>
</dbReference>
<dbReference type="PROSITE" id="PS00789">
    <property type="entry name" value="CHORISMATE_SYNTHASE_3"/>
    <property type="match status" value="1"/>
</dbReference>
<reference key="1">
    <citation type="journal article" date="2010" name="Genome Biol. Evol.">
        <title>Continuing evolution of Burkholderia mallei through genome reduction and large-scale rearrangements.</title>
        <authorList>
            <person name="Losada L."/>
            <person name="Ronning C.M."/>
            <person name="DeShazer D."/>
            <person name="Woods D."/>
            <person name="Fedorova N."/>
            <person name="Kim H.S."/>
            <person name="Shabalina S.A."/>
            <person name="Pearson T.R."/>
            <person name="Brinkac L."/>
            <person name="Tan P."/>
            <person name="Nandi T."/>
            <person name="Crabtree J."/>
            <person name="Badger J."/>
            <person name="Beckstrom-Sternberg S."/>
            <person name="Saqib M."/>
            <person name="Schutzer S.E."/>
            <person name="Keim P."/>
            <person name="Nierman W.C."/>
        </authorList>
    </citation>
    <scope>NUCLEOTIDE SEQUENCE [LARGE SCALE GENOMIC DNA]</scope>
    <source>
        <strain>1710b</strain>
    </source>
</reference>
<sequence>MSGNTLGTLFTVTTFGESHGPAIGCVIDGCPPGMALTEADVQLELDRRKPGTSRHVTQRQEPDQVEILSGVFEGVTTGAPIALLIRNTDQRSKDYGNIAETFRPGHADYTYWQKYGVRDYRGGGRSSARLTAPVVGAGAIAKKWLRERFGVEVRGYMSALGEIEIPFVDWSHVRENPFFAPNADIVPQLEGYMDALRKDGDSIGARIDVVASGVPVGWGEPLFDRLDADIAHAMMGINAVKGVEIGAGFASVAQRGSVHGDELTPDGFVGNHAGGVLGGISTGQDITVSIAIKPTSSIRTPRRSITRAGEPAVVETFGRHDPCVGIRATPIAESMLALVLIDHALRHRAQCGDVSSATPRIAARAPDAQ</sequence>
<keyword id="KW-0028">Amino-acid biosynthesis</keyword>
<keyword id="KW-0057">Aromatic amino acid biosynthesis</keyword>
<keyword id="KW-0274">FAD</keyword>
<keyword id="KW-0285">Flavoprotein</keyword>
<keyword id="KW-0288">FMN</keyword>
<keyword id="KW-0456">Lyase</keyword>
<keyword id="KW-0521">NADP</keyword>
<proteinExistence type="inferred from homology"/>
<accession>Q3JT35</accession>
<evidence type="ECO:0000255" key="1">
    <source>
        <dbReference type="HAMAP-Rule" id="MF_00300"/>
    </source>
</evidence>
<evidence type="ECO:0000305" key="2"/>
<name>AROC_BURP1</name>
<comment type="function">
    <text evidence="1">Catalyzes the anti-1,4-elimination of the C-3 phosphate and the C-6 proR hydrogen from 5-enolpyruvylshikimate-3-phosphate (EPSP) to yield chorismate, which is the branch point compound that serves as the starting substrate for the three terminal pathways of aromatic amino acid biosynthesis. This reaction introduces a second double bond into the aromatic ring system.</text>
</comment>
<comment type="catalytic activity">
    <reaction evidence="1">
        <text>5-O-(1-carboxyvinyl)-3-phosphoshikimate = chorismate + phosphate</text>
        <dbReference type="Rhea" id="RHEA:21020"/>
        <dbReference type="ChEBI" id="CHEBI:29748"/>
        <dbReference type="ChEBI" id="CHEBI:43474"/>
        <dbReference type="ChEBI" id="CHEBI:57701"/>
        <dbReference type="EC" id="4.2.3.5"/>
    </reaction>
</comment>
<comment type="cofactor">
    <cofactor evidence="1">
        <name>FMNH2</name>
        <dbReference type="ChEBI" id="CHEBI:57618"/>
    </cofactor>
    <text evidence="1">Reduced FMN (FMNH(2)).</text>
</comment>
<comment type="pathway">
    <text evidence="1">Metabolic intermediate biosynthesis; chorismate biosynthesis; chorismate from D-erythrose 4-phosphate and phosphoenolpyruvate: step 7/7.</text>
</comment>
<comment type="subunit">
    <text evidence="1">Homotetramer.</text>
</comment>
<comment type="similarity">
    <text evidence="1">Belongs to the chorismate synthase family.</text>
</comment>
<comment type="sequence caution" evidence="2">
    <conflict type="erroneous initiation">
        <sequence resource="EMBL-CDS" id="ABA47963"/>
    </conflict>
    <text>Extended N-terminus.</text>
</comment>
<feature type="chain" id="PRO_0000256278" description="Chorismate synthase">
    <location>
        <begin position="1"/>
        <end position="369"/>
    </location>
</feature>
<feature type="binding site" evidence="1">
    <location>
        <position position="48"/>
    </location>
    <ligand>
        <name>NADP(+)</name>
        <dbReference type="ChEBI" id="CHEBI:58349"/>
    </ligand>
</feature>
<feature type="binding site" evidence="1">
    <location>
        <position position="54"/>
    </location>
    <ligand>
        <name>NADP(+)</name>
        <dbReference type="ChEBI" id="CHEBI:58349"/>
    </ligand>
</feature>
<feature type="binding site" evidence="1">
    <location>
        <begin position="125"/>
        <end position="127"/>
    </location>
    <ligand>
        <name>FMN</name>
        <dbReference type="ChEBI" id="CHEBI:58210"/>
    </ligand>
</feature>
<feature type="binding site" evidence="1">
    <location>
        <begin position="238"/>
        <end position="239"/>
    </location>
    <ligand>
        <name>FMN</name>
        <dbReference type="ChEBI" id="CHEBI:58210"/>
    </ligand>
</feature>
<feature type="binding site" evidence="1">
    <location>
        <position position="278"/>
    </location>
    <ligand>
        <name>FMN</name>
        <dbReference type="ChEBI" id="CHEBI:58210"/>
    </ligand>
</feature>
<feature type="binding site" evidence="1">
    <location>
        <begin position="293"/>
        <end position="297"/>
    </location>
    <ligand>
        <name>FMN</name>
        <dbReference type="ChEBI" id="CHEBI:58210"/>
    </ligand>
</feature>
<feature type="binding site" evidence="1">
    <location>
        <position position="319"/>
    </location>
    <ligand>
        <name>FMN</name>
        <dbReference type="ChEBI" id="CHEBI:58210"/>
    </ligand>
</feature>
<protein>
    <recommendedName>
        <fullName evidence="1">Chorismate synthase</fullName>
        <shortName evidence="1">CS</shortName>
        <ecNumber evidence="1">4.2.3.5</ecNumber>
    </recommendedName>
    <alternativeName>
        <fullName evidence="1">5-enolpyruvylshikimate-3-phosphate phospholyase</fullName>
    </alternativeName>
</protein>
<gene>
    <name evidence="1" type="primary">aroC</name>
    <name type="ordered locus">BURPS1710b_1867</name>
</gene>
<organism>
    <name type="scientific">Burkholderia pseudomallei (strain 1710b)</name>
    <dbReference type="NCBI Taxonomy" id="320372"/>
    <lineage>
        <taxon>Bacteria</taxon>
        <taxon>Pseudomonadati</taxon>
        <taxon>Pseudomonadota</taxon>
        <taxon>Betaproteobacteria</taxon>
        <taxon>Burkholderiales</taxon>
        <taxon>Burkholderiaceae</taxon>
        <taxon>Burkholderia</taxon>
        <taxon>pseudomallei group</taxon>
    </lineage>
</organism>